<accession>A2BG43</accession>
<feature type="chain" id="PRO_0000343610" description="Glycolipid transfer protein">
    <location>
        <begin position="1"/>
        <end position="209"/>
    </location>
</feature>
<feature type="repeat" description="1">
    <location>
        <begin position="45"/>
        <end position="55"/>
    </location>
</feature>
<feature type="repeat" description="2">
    <location>
        <begin position="56"/>
        <end position="66"/>
    </location>
</feature>
<feature type="region of interest" description="2 X 12 AA approximate tandem repeats">
    <location>
        <begin position="45"/>
        <end position="66"/>
    </location>
</feature>
<feature type="binding site" evidence="2">
    <location>
        <begin position="48"/>
        <end position="55"/>
    </location>
    <ligand>
        <name>beta-D-galactosyl-(1-&gt;4)-beta-D-glucosyl-(1&lt;-&gt;1)-N-[(9Z)-octadecenoyl]-sphing-4-enine</name>
        <dbReference type="ChEBI" id="CHEBI:131557"/>
    </ligand>
</feature>
<feature type="binding site" evidence="2">
    <location>
        <position position="140"/>
    </location>
    <ligand>
        <name>beta-D-galactosyl-(1-&gt;4)-beta-D-glucosyl-(1&lt;-&gt;1)-N-[(9Z)-octadecenoyl]-sphing-4-enine</name>
        <dbReference type="ChEBI" id="CHEBI:131557"/>
    </ligand>
</feature>
<feature type="binding site" evidence="2">
    <location>
        <position position="207"/>
    </location>
    <ligand>
        <name>beta-D-galactosyl-(1-&gt;4)-beta-D-glucosyl-(1&lt;-&gt;1)-N-[(9Z)-octadecenoyl]-sphing-4-enine</name>
        <dbReference type="ChEBI" id="CHEBI:131557"/>
    </ligand>
</feature>
<proteinExistence type="inferred from homology"/>
<comment type="function">
    <text evidence="1">Accelerates the intermembrane transfer of various glycolipids. Catalyzes the transfer of various glycosphingolipids between membranes but does not catalyze the transfer of phospholipids. May be involved in the intracellular translocation of glucosylceramides (By similarity).</text>
</comment>
<comment type="subcellular location">
    <subcellularLocation>
        <location evidence="1">Cytoplasm</location>
    </subcellularLocation>
</comment>
<comment type="similarity">
    <text evidence="3">Belongs to the GLTP family.</text>
</comment>
<organism>
    <name type="scientific">Danio rerio</name>
    <name type="common">Zebrafish</name>
    <name type="synonym">Brachydanio rerio</name>
    <dbReference type="NCBI Taxonomy" id="7955"/>
    <lineage>
        <taxon>Eukaryota</taxon>
        <taxon>Metazoa</taxon>
        <taxon>Chordata</taxon>
        <taxon>Craniata</taxon>
        <taxon>Vertebrata</taxon>
        <taxon>Euteleostomi</taxon>
        <taxon>Actinopterygii</taxon>
        <taxon>Neopterygii</taxon>
        <taxon>Teleostei</taxon>
        <taxon>Ostariophysi</taxon>
        <taxon>Cypriniformes</taxon>
        <taxon>Danionidae</taxon>
        <taxon>Danioninae</taxon>
        <taxon>Danio</taxon>
    </lineage>
</organism>
<reference key="1">
    <citation type="journal article" date="2013" name="Nature">
        <title>The zebrafish reference genome sequence and its relationship to the human genome.</title>
        <authorList>
            <person name="Howe K."/>
            <person name="Clark M.D."/>
            <person name="Torroja C.F."/>
            <person name="Torrance J."/>
            <person name="Berthelot C."/>
            <person name="Muffato M."/>
            <person name="Collins J.E."/>
            <person name="Humphray S."/>
            <person name="McLaren K."/>
            <person name="Matthews L."/>
            <person name="McLaren S."/>
            <person name="Sealy I."/>
            <person name="Caccamo M."/>
            <person name="Churcher C."/>
            <person name="Scott C."/>
            <person name="Barrett J.C."/>
            <person name="Koch R."/>
            <person name="Rauch G.J."/>
            <person name="White S."/>
            <person name="Chow W."/>
            <person name="Kilian B."/>
            <person name="Quintais L.T."/>
            <person name="Guerra-Assuncao J.A."/>
            <person name="Zhou Y."/>
            <person name="Gu Y."/>
            <person name="Yen J."/>
            <person name="Vogel J.H."/>
            <person name="Eyre T."/>
            <person name="Redmond S."/>
            <person name="Banerjee R."/>
            <person name="Chi J."/>
            <person name="Fu B."/>
            <person name="Langley E."/>
            <person name="Maguire S.F."/>
            <person name="Laird G.K."/>
            <person name="Lloyd D."/>
            <person name="Kenyon E."/>
            <person name="Donaldson S."/>
            <person name="Sehra H."/>
            <person name="Almeida-King J."/>
            <person name="Loveland J."/>
            <person name="Trevanion S."/>
            <person name="Jones M."/>
            <person name="Quail M."/>
            <person name="Willey D."/>
            <person name="Hunt A."/>
            <person name="Burton J."/>
            <person name="Sims S."/>
            <person name="McLay K."/>
            <person name="Plumb B."/>
            <person name="Davis J."/>
            <person name="Clee C."/>
            <person name="Oliver K."/>
            <person name="Clark R."/>
            <person name="Riddle C."/>
            <person name="Elliot D."/>
            <person name="Threadgold G."/>
            <person name="Harden G."/>
            <person name="Ware D."/>
            <person name="Begum S."/>
            <person name="Mortimore B."/>
            <person name="Kerry G."/>
            <person name="Heath P."/>
            <person name="Phillimore B."/>
            <person name="Tracey A."/>
            <person name="Corby N."/>
            <person name="Dunn M."/>
            <person name="Johnson C."/>
            <person name="Wood J."/>
            <person name="Clark S."/>
            <person name="Pelan S."/>
            <person name="Griffiths G."/>
            <person name="Smith M."/>
            <person name="Glithero R."/>
            <person name="Howden P."/>
            <person name="Barker N."/>
            <person name="Lloyd C."/>
            <person name="Stevens C."/>
            <person name="Harley J."/>
            <person name="Holt K."/>
            <person name="Panagiotidis G."/>
            <person name="Lovell J."/>
            <person name="Beasley H."/>
            <person name="Henderson C."/>
            <person name="Gordon D."/>
            <person name="Auger K."/>
            <person name="Wright D."/>
            <person name="Collins J."/>
            <person name="Raisen C."/>
            <person name="Dyer L."/>
            <person name="Leung K."/>
            <person name="Robertson L."/>
            <person name="Ambridge K."/>
            <person name="Leongamornlert D."/>
            <person name="McGuire S."/>
            <person name="Gilderthorp R."/>
            <person name="Griffiths C."/>
            <person name="Manthravadi D."/>
            <person name="Nichol S."/>
            <person name="Barker G."/>
            <person name="Whitehead S."/>
            <person name="Kay M."/>
            <person name="Brown J."/>
            <person name="Murnane C."/>
            <person name="Gray E."/>
            <person name="Humphries M."/>
            <person name="Sycamore N."/>
            <person name="Barker D."/>
            <person name="Saunders D."/>
            <person name="Wallis J."/>
            <person name="Babbage A."/>
            <person name="Hammond S."/>
            <person name="Mashreghi-Mohammadi M."/>
            <person name="Barr L."/>
            <person name="Martin S."/>
            <person name="Wray P."/>
            <person name="Ellington A."/>
            <person name="Matthews N."/>
            <person name="Ellwood M."/>
            <person name="Woodmansey R."/>
            <person name="Clark G."/>
            <person name="Cooper J."/>
            <person name="Tromans A."/>
            <person name="Grafham D."/>
            <person name="Skuce C."/>
            <person name="Pandian R."/>
            <person name="Andrews R."/>
            <person name="Harrison E."/>
            <person name="Kimberley A."/>
            <person name="Garnett J."/>
            <person name="Fosker N."/>
            <person name="Hall R."/>
            <person name="Garner P."/>
            <person name="Kelly D."/>
            <person name="Bird C."/>
            <person name="Palmer S."/>
            <person name="Gehring I."/>
            <person name="Berger A."/>
            <person name="Dooley C.M."/>
            <person name="Ersan-Urun Z."/>
            <person name="Eser C."/>
            <person name="Geiger H."/>
            <person name="Geisler M."/>
            <person name="Karotki L."/>
            <person name="Kirn A."/>
            <person name="Konantz J."/>
            <person name="Konantz M."/>
            <person name="Oberlander M."/>
            <person name="Rudolph-Geiger S."/>
            <person name="Teucke M."/>
            <person name="Lanz C."/>
            <person name="Raddatz G."/>
            <person name="Osoegawa K."/>
            <person name="Zhu B."/>
            <person name="Rapp A."/>
            <person name="Widaa S."/>
            <person name="Langford C."/>
            <person name="Yang F."/>
            <person name="Schuster S.C."/>
            <person name="Carter N.P."/>
            <person name="Harrow J."/>
            <person name="Ning Z."/>
            <person name="Herrero J."/>
            <person name="Searle S.M."/>
            <person name="Enright A."/>
            <person name="Geisler R."/>
            <person name="Plasterk R.H."/>
            <person name="Lee C."/>
            <person name="Westerfield M."/>
            <person name="de Jong P.J."/>
            <person name="Zon L.I."/>
            <person name="Postlethwait J.H."/>
            <person name="Nusslein-Volhard C."/>
            <person name="Hubbard T.J."/>
            <person name="Roest Crollius H."/>
            <person name="Rogers J."/>
            <person name="Stemple D.L."/>
        </authorList>
    </citation>
    <scope>NUCLEOTIDE SEQUENCE [LARGE SCALE GENOMIC DNA]</scope>
    <source>
        <strain>Tuebingen</strain>
    </source>
</reference>
<keyword id="KW-0963">Cytoplasm</keyword>
<keyword id="KW-0445">Lipid transport</keyword>
<keyword id="KW-1185">Reference proteome</keyword>
<keyword id="KW-0677">Repeat</keyword>
<keyword id="KW-0813">Transport</keyword>
<dbReference type="EMBL" id="BX323811">
    <property type="protein sequence ID" value="CAM15568.1"/>
    <property type="molecule type" value="Genomic_DNA"/>
</dbReference>
<dbReference type="RefSeq" id="NP_001093458.1">
    <property type="nucleotide sequence ID" value="NM_001099988.1"/>
</dbReference>
<dbReference type="SMR" id="A2BG43"/>
<dbReference type="FunCoup" id="A2BG43">
    <property type="interactions" value="1608"/>
</dbReference>
<dbReference type="STRING" id="7955.ENSDARP00000083337"/>
<dbReference type="PaxDb" id="7955-ENSDARP00000083337"/>
<dbReference type="PeptideAtlas" id="A2BG43"/>
<dbReference type="Ensembl" id="ENSDART00000088904">
    <property type="protein sequence ID" value="ENSDARP00000083337"/>
    <property type="gene ID" value="ENSDARG00000061921"/>
</dbReference>
<dbReference type="GeneID" id="558007"/>
<dbReference type="KEGG" id="dre:558007"/>
<dbReference type="AGR" id="ZFIN:ZDB-GENE-060526-266"/>
<dbReference type="CTD" id="558007"/>
<dbReference type="ZFIN" id="ZDB-GENE-060526-266">
    <property type="gene designation" value="gltpa"/>
</dbReference>
<dbReference type="eggNOG" id="KOG3221">
    <property type="taxonomic scope" value="Eukaryota"/>
</dbReference>
<dbReference type="HOGENOM" id="CLU_079400_2_1_1"/>
<dbReference type="InParanoid" id="A2BG43"/>
<dbReference type="OMA" id="EMHGAEW"/>
<dbReference type="OrthoDB" id="205255at2759"/>
<dbReference type="PhylomeDB" id="A2BG43"/>
<dbReference type="TreeFam" id="TF317467"/>
<dbReference type="Reactome" id="R-DRE-9845576">
    <property type="pathway name" value="Glycosphingolipid transport"/>
</dbReference>
<dbReference type="PRO" id="PR:A2BG43"/>
<dbReference type="Proteomes" id="UP000000437">
    <property type="component" value="Chromosome 5"/>
</dbReference>
<dbReference type="Bgee" id="ENSDARG00000061921">
    <property type="expression patterns" value="Expressed in intestine and 20 other cell types or tissues"/>
</dbReference>
<dbReference type="GO" id="GO:0005829">
    <property type="term" value="C:cytosol"/>
    <property type="evidence" value="ECO:0000318"/>
    <property type="project" value="GO_Central"/>
</dbReference>
<dbReference type="GO" id="GO:1902387">
    <property type="term" value="F:ceramide 1-phosphate binding"/>
    <property type="evidence" value="ECO:0000318"/>
    <property type="project" value="GO_Central"/>
</dbReference>
<dbReference type="GO" id="GO:1902388">
    <property type="term" value="F:ceramide 1-phosphate transfer activity"/>
    <property type="evidence" value="ECO:0000318"/>
    <property type="project" value="GO_Central"/>
</dbReference>
<dbReference type="GO" id="GO:0035627">
    <property type="term" value="P:ceramide transport"/>
    <property type="evidence" value="ECO:0000318"/>
    <property type="project" value="GO_Central"/>
</dbReference>
<dbReference type="GO" id="GO:0120009">
    <property type="term" value="P:intermembrane lipid transfer"/>
    <property type="evidence" value="ECO:0000318"/>
    <property type="project" value="GO_Central"/>
</dbReference>
<dbReference type="FunFam" id="1.10.3520.10:FF:000003">
    <property type="entry name" value="glycolipid transfer protein"/>
    <property type="match status" value="1"/>
</dbReference>
<dbReference type="Gene3D" id="1.10.3520.10">
    <property type="entry name" value="Glycolipid transfer protein"/>
    <property type="match status" value="1"/>
</dbReference>
<dbReference type="InterPro" id="IPR036497">
    <property type="entry name" value="GLTP_sf"/>
</dbReference>
<dbReference type="InterPro" id="IPR014830">
    <property type="entry name" value="Glycolipid_transfer_prot_dom"/>
</dbReference>
<dbReference type="PANTHER" id="PTHR10219:SF97">
    <property type="entry name" value="GLYCOLIPID TRANSFER PROTEIN"/>
    <property type="match status" value="1"/>
</dbReference>
<dbReference type="PANTHER" id="PTHR10219">
    <property type="entry name" value="GLYCOLIPID TRANSFER PROTEIN-RELATED"/>
    <property type="match status" value="1"/>
</dbReference>
<dbReference type="Pfam" id="PF08718">
    <property type="entry name" value="GLTP"/>
    <property type="match status" value="1"/>
</dbReference>
<dbReference type="SUPFAM" id="SSF110004">
    <property type="entry name" value="Glycolipid transfer protein, GLTP"/>
    <property type="match status" value="1"/>
</dbReference>
<gene>
    <name type="primary">gltp</name>
    <name type="ORF">si:dkey-234h16.2</name>
</gene>
<protein>
    <recommendedName>
        <fullName>Glycolipid transfer protein</fullName>
        <shortName>GLTP</shortName>
    </recommendedName>
</protein>
<sequence length="209" mass="23949">MALLMEHQFRQLPADKQVETRPFLEAVSHLPPFFDCLGSAVFSPIKADIAGNITKIKAVYDSNPTRFKTLQQILEAEKEMHGAEWPKVGATLALMWLKRGLRFIQVLLQSLVDGDKDDNNPNLIKVNVTKAYEMALKKYHGWIVQKLFQAALYAAPYRSDFLRALSKGREVKDEECLDKVRQFLVNFTATNDAIYEMYTKMNADLDYKV</sequence>
<name>GLTP_DANRE</name>
<evidence type="ECO:0000250" key="1"/>
<evidence type="ECO:0000250" key="2">
    <source>
        <dbReference type="UniProtKB" id="Q9NZD2"/>
    </source>
</evidence>
<evidence type="ECO:0000305" key="3"/>